<feature type="chain" id="PRO_1000088607" description="Tyrosine--tRNA ligase">
    <location>
        <begin position="1"/>
        <end position="430"/>
    </location>
</feature>
<feature type="domain" description="S4 RNA-binding" evidence="1">
    <location>
        <begin position="362"/>
        <end position="429"/>
    </location>
</feature>
<feature type="short sequence motif" description="'HIGH' region">
    <location>
        <begin position="37"/>
        <end position="46"/>
    </location>
</feature>
<feature type="short sequence motif" description="'KMSKS' region">
    <location>
        <begin position="232"/>
        <end position="236"/>
    </location>
</feature>
<feature type="binding site" evidence="1">
    <location>
        <position position="32"/>
    </location>
    <ligand>
        <name>L-tyrosine</name>
        <dbReference type="ChEBI" id="CHEBI:58315"/>
    </ligand>
</feature>
<feature type="binding site" evidence="1">
    <location>
        <position position="172"/>
    </location>
    <ligand>
        <name>L-tyrosine</name>
        <dbReference type="ChEBI" id="CHEBI:58315"/>
    </ligand>
</feature>
<feature type="binding site" evidence="1">
    <location>
        <position position="176"/>
    </location>
    <ligand>
        <name>L-tyrosine</name>
        <dbReference type="ChEBI" id="CHEBI:58315"/>
    </ligand>
</feature>
<feature type="binding site" evidence="1">
    <location>
        <position position="235"/>
    </location>
    <ligand>
        <name>ATP</name>
        <dbReference type="ChEBI" id="CHEBI:30616"/>
    </ligand>
</feature>
<accession>A6LGF1</accession>
<protein>
    <recommendedName>
        <fullName evidence="1">Tyrosine--tRNA ligase</fullName>
        <ecNumber evidence="1">6.1.1.1</ecNumber>
    </recommendedName>
    <alternativeName>
        <fullName evidence="1">Tyrosyl-tRNA synthetase</fullName>
        <shortName evidence="1">TyrRS</shortName>
    </alternativeName>
</protein>
<organism>
    <name type="scientific">Parabacteroides distasonis (strain ATCC 8503 / DSM 20701 / CIP 104284 / JCM 5825 / NCTC 11152)</name>
    <dbReference type="NCBI Taxonomy" id="435591"/>
    <lineage>
        <taxon>Bacteria</taxon>
        <taxon>Pseudomonadati</taxon>
        <taxon>Bacteroidota</taxon>
        <taxon>Bacteroidia</taxon>
        <taxon>Bacteroidales</taxon>
        <taxon>Tannerellaceae</taxon>
        <taxon>Parabacteroides</taxon>
    </lineage>
</organism>
<keyword id="KW-0030">Aminoacyl-tRNA synthetase</keyword>
<keyword id="KW-0067">ATP-binding</keyword>
<keyword id="KW-0963">Cytoplasm</keyword>
<keyword id="KW-0436">Ligase</keyword>
<keyword id="KW-0547">Nucleotide-binding</keyword>
<keyword id="KW-0648">Protein biosynthesis</keyword>
<keyword id="KW-1185">Reference proteome</keyword>
<keyword id="KW-0694">RNA-binding</keyword>
<reference key="1">
    <citation type="journal article" date="2007" name="PLoS Biol.">
        <title>Evolution of symbiotic bacteria in the distal human intestine.</title>
        <authorList>
            <person name="Xu J."/>
            <person name="Mahowald M.A."/>
            <person name="Ley R.E."/>
            <person name="Lozupone C.A."/>
            <person name="Hamady M."/>
            <person name="Martens E.C."/>
            <person name="Henrissat B."/>
            <person name="Coutinho P.M."/>
            <person name="Minx P."/>
            <person name="Latreille P."/>
            <person name="Cordum H."/>
            <person name="Van Brunt A."/>
            <person name="Kim K."/>
            <person name="Fulton R.S."/>
            <person name="Fulton L.A."/>
            <person name="Clifton S.W."/>
            <person name="Wilson R.K."/>
            <person name="Knight R.D."/>
            <person name="Gordon J.I."/>
        </authorList>
    </citation>
    <scope>NUCLEOTIDE SEQUENCE [LARGE SCALE GENOMIC DNA]</scope>
    <source>
        <strain>ATCC 8503 / DSM 20701 / CIP 104284 / JCM 5825 / NCTC 11152</strain>
    </source>
</reference>
<name>SYY_PARD8</name>
<gene>
    <name evidence="1" type="primary">tyrS</name>
    <name type="ordered locus">BDI_3058</name>
</gene>
<comment type="function">
    <text evidence="1">Catalyzes the attachment of tyrosine to tRNA(Tyr) in a two-step reaction: tyrosine is first activated by ATP to form Tyr-AMP and then transferred to the acceptor end of tRNA(Tyr).</text>
</comment>
<comment type="catalytic activity">
    <reaction evidence="1">
        <text>tRNA(Tyr) + L-tyrosine + ATP = L-tyrosyl-tRNA(Tyr) + AMP + diphosphate + H(+)</text>
        <dbReference type="Rhea" id="RHEA:10220"/>
        <dbReference type="Rhea" id="RHEA-COMP:9706"/>
        <dbReference type="Rhea" id="RHEA-COMP:9707"/>
        <dbReference type="ChEBI" id="CHEBI:15378"/>
        <dbReference type="ChEBI" id="CHEBI:30616"/>
        <dbReference type="ChEBI" id="CHEBI:33019"/>
        <dbReference type="ChEBI" id="CHEBI:58315"/>
        <dbReference type="ChEBI" id="CHEBI:78442"/>
        <dbReference type="ChEBI" id="CHEBI:78536"/>
        <dbReference type="ChEBI" id="CHEBI:456215"/>
        <dbReference type="EC" id="6.1.1.1"/>
    </reaction>
</comment>
<comment type="subunit">
    <text evidence="1">Homodimer.</text>
</comment>
<comment type="subcellular location">
    <subcellularLocation>
        <location evidence="1">Cytoplasm</location>
    </subcellularLocation>
</comment>
<comment type="similarity">
    <text evidence="1">Belongs to the class-I aminoacyl-tRNA synthetase family. TyrS type 1 subfamily.</text>
</comment>
<sequence length="430" mass="48352">MNFVEELRWRGMIADMMPGTEEQLQKELTSAYVGIDPTADSLHIGHLVSVMMLKHFQRAGHRPIALVGGATGMIGDPSMKSAERNLLDEATLRHNQDCIKKQLAKFLDFDSDAPNAAKLVNNYDWMKGYSFLNFIRDIGKHITVNYMMAKDSVKKRLSRESSVGMSFTEFSYQLLQGYDYLYLYEHEGCRLQMGGTDQWGNITTGTELIRRTLGGEAYALTCPLITKADGGKFGKTESGNIWLDRRYTSPYKFYQFWLNVSDADAAKYIKIFTDLSQEEIAALEAEQEAAPHLRPLQKRLAKEVTVMVHSLEDYEAAVEASNILFGNSTHEALLKLDEDTLLAVFEGVPHFDISRDELAAGIKAVDLCTEKAAIFPSKGEMRKLVQSGGVSFNKEKLAEVDTVIDCSSLLDDKYLLVQRGKKNYYLLIAK</sequence>
<dbReference type="EC" id="6.1.1.1" evidence="1"/>
<dbReference type="EMBL" id="CP000140">
    <property type="protein sequence ID" value="ABR44765.1"/>
    <property type="molecule type" value="Genomic_DNA"/>
</dbReference>
<dbReference type="RefSeq" id="WP_008778966.1">
    <property type="nucleotide sequence ID" value="NC_009615.1"/>
</dbReference>
<dbReference type="SMR" id="A6LGF1"/>
<dbReference type="STRING" id="435591.BDI_3058"/>
<dbReference type="PaxDb" id="435591-BDI_3058"/>
<dbReference type="GeneID" id="93523104"/>
<dbReference type="KEGG" id="pdi:BDI_3058"/>
<dbReference type="eggNOG" id="COG0162">
    <property type="taxonomic scope" value="Bacteria"/>
</dbReference>
<dbReference type="HOGENOM" id="CLU_024003_0_3_10"/>
<dbReference type="BioCyc" id="PDIS435591:G1G5A-3134-MONOMER"/>
<dbReference type="Proteomes" id="UP000000566">
    <property type="component" value="Chromosome"/>
</dbReference>
<dbReference type="GO" id="GO:0005829">
    <property type="term" value="C:cytosol"/>
    <property type="evidence" value="ECO:0007669"/>
    <property type="project" value="TreeGrafter"/>
</dbReference>
<dbReference type="GO" id="GO:0005524">
    <property type="term" value="F:ATP binding"/>
    <property type="evidence" value="ECO:0007669"/>
    <property type="project" value="UniProtKB-UniRule"/>
</dbReference>
<dbReference type="GO" id="GO:0003723">
    <property type="term" value="F:RNA binding"/>
    <property type="evidence" value="ECO:0007669"/>
    <property type="project" value="UniProtKB-KW"/>
</dbReference>
<dbReference type="GO" id="GO:0004831">
    <property type="term" value="F:tyrosine-tRNA ligase activity"/>
    <property type="evidence" value="ECO:0007669"/>
    <property type="project" value="UniProtKB-UniRule"/>
</dbReference>
<dbReference type="GO" id="GO:0006437">
    <property type="term" value="P:tyrosyl-tRNA aminoacylation"/>
    <property type="evidence" value="ECO:0007669"/>
    <property type="project" value="UniProtKB-UniRule"/>
</dbReference>
<dbReference type="CDD" id="cd00805">
    <property type="entry name" value="TyrRS_core"/>
    <property type="match status" value="1"/>
</dbReference>
<dbReference type="FunFam" id="1.10.240.10:FF:000001">
    <property type="entry name" value="Tyrosine--tRNA ligase"/>
    <property type="match status" value="1"/>
</dbReference>
<dbReference type="FunFam" id="3.10.290.10:FF:000014">
    <property type="entry name" value="Tyrosine--tRNA ligase"/>
    <property type="match status" value="1"/>
</dbReference>
<dbReference type="FunFam" id="3.40.50.620:FF:000008">
    <property type="entry name" value="Tyrosine--tRNA ligase"/>
    <property type="match status" value="1"/>
</dbReference>
<dbReference type="Gene3D" id="3.40.50.620">
    <property type="entry name" value="HUPs"/>
    <property type="match status" value="1"/>
</dbReference>
<dbReference type="Gene3D" id="3.10.290.10">
    <property type="entry name" value="RNA-binding S4 domain"/>
    <property type="match status" value="1"/>
</dbReference>
<dbReference type="Gene3D" id="1.10.240.10">
    <property type="entry name" value="Tyrosyl-Transfer RNA Synthetase"/>
    <property type="match status" value="1"/>
</dbReference>
<dbReference type="HAMAP" id="MF_02006">
    <property type="entry name" value="Tyr_tRNA_synth_type1"/>
    <property type="match status" value="1"/>
</dbReference>
<dbReference type="InterPro" id="IPR001412">
    <property type="entry name" value="aa-tRNA-synth_I_CS"/>
</dbReference>
<dbReference type="InterPro" id="IPR002305">
    <property type="entry name" value="aa-tRNA-synth_Ic"/>
</dbReference>
<dbReference type="InterPro" id="IPR014729">
    <property type="entry name" value="Rossmann-like_a/b/a_fold"/>
</dbReference>
<dbReference type="InterPro" id="IPR036986">
    <property type="entry name" value="S4_RNA-bd_sf"/>
</dbReference>
<dbReference type="InterPro" id="IPR054608">
    <property type="entry name" value="SYY-like_C"/>
</dbReference>
<dbReference type="InterPro" id="IPR002307">
    <property type="entry name" value="Tyr-tRNA-ligase"/>
</dbReference>
<dbReference type="InterPro" id="IPR024088">
    <property type="entry name" value="Tyr-tRNA-ligase_bac-type"/>
</dbReference>
<dbReference type="InterPro" id="IPR024107">
    <property type="entry name" value="Tyr-tRNA-ligase_bac_1"/>
</dbReference>
<dbReference type="NCBIfam" id="TIGR00234">
    <property type="entry name" value="tyrS"/>
    <property type="match status" value="1"/>
</dbReference>
<dbReference type="PANTHER" id="PTHR11766:SF0">
    <property type="entry name" value="TYROSINE--TRNA LIGASE, MITOCHONDRIAL"/>
    <property type="match status" value="1"/>
</dbReference>
<dbReference type="PANTHER" id="PTHR11766">
    <property type="entry name" value="TYROSYL-TRNA SYNTHETASE"/>
    <property type="match status" value="1"/>
</dbReference>
<dbReference type="Pfam" id="PF22421">
    <property type="entry name" value="SYY_C-terminal"/>
    <property type="match status" value="1"/>
</dbReference>
<dbReference type="Pfam" id="PF00579">
    <property type="entry name" value="tRNA-synt_1b"/>
    <property type="match status" value="1"/>
</dbReference>
<dbReference type="PRINTS" id="PR01040">
    <property type="entry name" value="TRNASYNTHTYR"/>
</dbReference>
<dbReference type="SUPFAM" id="SSF55174">
    <property type="entry name" value="Alpha-L RNA-binding motif"/>
    <property type="match status" value="1"/>
</dbReference>
<dbReference type="SUPFAM" id="SSF52374">
    <property type="entry name" value="Nucleotidylyl transferase"/>
    <property type="match status" value="1"/>
</dbReference>
<dbReference type="PROSITE" id="PS00178">
    <property type="entry name" value="AA_TRNA_LIGASE_I"/>
    <property type="match status" value="1"/>
</dbReference>
<dbReference type="PROSITE" id="PS50889">
    <property type="entry name" value="S4"/>
    <property type="match status" value="1"/>
</dbReference>
<proteinExistence type="inferred from homology"/>
<evidence type="ECO:0000255" key="1">
    <source>
        <dbReference type="HAMAP-Rule" id="MF_02006"/>
    </source>
</evidence>